<comment type="function">
    <text evidence="1">Catalyzes the initial step of the lipid cycle reactions in the biosynthesis of the cell wall peptidoglycan: transfers peptidoglycan precursor phospho-MurNAc-pentapeptide from UDP-MurNAc-pentapeptide onto the lipid carrier undecaprenyl phosphate, yielding undecaprenyl-pyrophosphoryl-MurNAc-pentapeptide, known as lipid I.</text>
</comment>
<comment type="catalytic activity">
    <reaction evidence="1">
        <text>UDP-N-acetyl-alpha-D-muramoyl-L-alanyl-gamma-D-glutamyl-meso-2,6-diaminopimeloyl-D-alanyl-D-alanine + di-trans,octa-cis-undecaprenyl phosphate = di-trans,octa-cis-undecaprenyl diphospho-N-acetyl-alpha-D-muramoyl-L-alanyl-D-glutamyl-meso-2,6-diaminopimeloyl-D-alanyl-D-alanine + UMP</text>
        <dbReference type="Rhea" id="RHEA:28386"/>
        <dbReference type="ChEBI" id="CHEBI:57865"/>
        <dbReference type="ChEBI" id="CHEBI:60392"/>
        <dbReference type="ChEBI" id="CHEBI:61386"/>
        <dbReference type="ChEBI" id="CHEBI:61387"/>
        <dbReference type="EC" id="2.7.8.13"/>
    </reaction>
</comment>
<comment type="cofactor">
    <cofactor evidence="1">
        <name>Mg(2+)</name>
        <dbReference type="ChEBI" id="CHEBI:18420"/>
    </cofactor>
</comment>
<comment type="pathway">
    <text evidence="1">Cell wall biogenesis; peptidoglycan biosynthesis.</text>
</comment>
<comment type="subcellular location">
    <subcellularLocation>
        <location evidence="1">Cell inner membrane</location>
        <topology evidence="1">Multi-pass membrane protein</topology>
    </subcellularLocation>
</comment>
<comment type="similarity">
    <text evidence="1">Belongs to the glycosyltransferase 4 family. MraY subfamily.</text>
</comment>
<name>MRAY_LEGPL</name>
<reference key="1">
    <citation type="journal article" date="2004" name="Nat. Genet.">
        <title>Evidence in the Legionella pneumophila genome for exploitation of host cell functions and high genome plasticity.</title>
        <authorList>
            <person name="Cazalet C."/>
            <person name="Rusniok C."/>
            <person name="Brueggemann H."/>
            <person name="Zidane N."/>
            <person name="Magnier A."/>
            <person name="Ma L."/>
            <person name="Tichit M."/>
            <person name="Jarraud S."/>
            <person name="Bouchier C."/>
            <person name="Vandenesch F."/>
            <person name="Kunst F."/>
            <person name="Etienne J."/>
            <person name="Glaser P."/>
            <person name="Buchrieser C."/>
        </authorList>
    </citation>
    <scope>NUCLEOTIDE SEQUENCE [LARGE SCALE GENOMIC DNA]</scope>
    <source>
        <strain>Lens</strain>
    </source>
</reference>
<organism>
    <name type="scientific">Legionella pneumophila (strain Lens)</name>
    <dbReference type="NCBI Taxonomy" id="297245"/>
    <lineage>
        <taxon>Bacteria</taxon>
        <taxon>Pseudomonadati</taxon>
        <taxon>Pseudomonadota</taxon>
        <taxon>Gammaproteobacteria</taxon>
        <taxon>Legionellales</taxon>
        <taxon>Legionellaceae</taxon>
        <taxon>Legionella</taxon>
    </lineage>
</organism>
<evidence type="ECO:0000255" key="1">
    <source>
        <dbReference type="HAMAP-Rule" id="MF_00038"/>
    </source>
</evidence>
<keyword id="KW-0131">Cell cycle</keyword>
<keyword id="KW-0132">Cell division</keyword>
<keyword id="KW-0997">Cell inner membrane</keyword>
<keyword id="KW-1003">Cell membrane</keyword>
<keyword id="KW-0133">Cell shape</keyword>
<keyword id="KW-0961">Cell wall biogenesis/degradation</keyword>
<keyword id="KW-0460">Magnesium</keyword>
<keyword id="KW-0472">Membrane</keyword>
<keyword id="KW-0479">Metal-binding</keyword>
<keyword id="KW-0573">Peptidoglycan synthesis</keyword>
<keyword id="KW-0808">Transferase</keyword>
<keyword id="KW-0812">Transmembrane</keyword>
<keyword id="KW-1133">Transmembrane helix</keyword>
<dbReference type="EC" id="2.7.8.13" evidence="1"/>
<dbReference type="EMBL" id="CR628337">
    <property type="protein sequence ID" value="CAH16780.1"/>
    <property type="molecule type" value="Genomic_DNA"/>
</dbReference>
<dbReference type="RefSeq" id="WP_011216492.1">
    <property type="nucleotide sequence ID" value="NC_006369.1"/>
</dbReference>
<dbReference type="SMR" id="Q5WTI4"/>
<dbReference type="KEGG" id="lpf:lpl2540"/>
<dbReference type="LegioList" id="lpl2540"/>
<dbReference type="HOGENOM" id="CLU_023982_0_0_6"/>
<dbReference type="UniPathway" id="UPA00219"/>
<dbReference type="Proteomes" id="UP000002517">
    <property type="component" value="Chromosome"/>
</dbReference>
<dbReference type="GO" id="GO:0005886">
    <property type="term" value="C:plasma membrane"/>
    <property type="evidence" value="ECO:0007669"/>
    <property type="project" value="UniProtKB-SubCell"/>
</dbReference>
<dbReference type="GO" id="GO:0046872">
    <property type="term" value="F:metal ion binding"/>
    <property type="evidence" value="ECO:0007669"/>
    <property type="project" value="UniProtKB-KW"/>
</dbReference>
<dbReference type="GO" id="GO:0008963">
    <property type="term" value="F:phospho-N-acetylmuramoyl-pentapeptide-transferase activity"/>
    <property type="evidence" value="ECO:0007669"/>
    <property type="project" value="UniProtKB-UniRule"/>
</dbReference>
<dbReference type="GO" id="GO:0051992">
    <property type="term" value="F:UDP-N-acetylmuramoyl-L-alanyl-D-glutamyl-meso-2,6-diaminopimelyl-D-alanyl-D-alanine:undecaprenyl-phosphate transferase activity"/>
    <property type="evidence" value="ECO:0007669"/>
    <property type="project" value="RHEA"/>
</dbReference>
<dbReference type="GO" id="GO:0051301">
    <property type="term" value="P:cell division"/>
    <property type="evidence" value="ECO:0007669"/>
    <property type="project" value="UniProtKB-KW"/>
</dbReference>
<dbReference type="GO" id="GO:0071555">
    <property type="term" value="P:cell wall organization"/>
    <property type="evidence" value="ECO:0007669"/>
    <property type="project" value="UniProtKB-KW"/>
</dbReference>
<dbReference type="GO" id="GO:0009252">
    <property type="term" value="P:peptidoglycan biosynthetic process"/>
    <property type="evidence" value="ECO:0007669"/>
    <property type="project" value="UniProtKB-UniRule"/>
</dbReference>
<dbReference type="GO" id="GO:0008360">
    <property type="term" value="P:regulation of cell shape"/>
    <property type="evidence" value="ECO:0007669"/>
    <property type="project" value="UniProtKB-KW"/>
</dbReference>
<dbReference type="CDD" id="cd06852">
    <property type="entry name" value="GT_MraY"/>
    <property type="match status" value="1"/>
</dbReference>
<dbReference type="HAMAP" id="MF_00038">
    <property type="entry name" value="MraY"/>
    <property type="match status" value="1"/>
</dbReference>
<dbReference type="InterPro" id="IPR000715">
    <property type="entry name" value="Glycosyl_transferase_4"/>
</dbReference>
<dbReference type="InterPro" id="IPR003524">
    <property type="entry name" value="PNAcMuramoyl-5peptid_Trfase"/>
</dbReference>
<dbReference type="InterPro" id="IPR018480">
    <property type="entry name" value="PNAcMuramoyl-5peptid_Trfase_CS"/>
</dbReference>
<dbReference type="NCBIfam" id="TIGR00445">
    <property type="entry name" value="mraY"/>
    <property type="match status" value="1"/>
</dbReference>
<dbReference type="PANTHER" id="PTHR22926">
    <property type="entry name" value="PHOSPHO-N-ACETYLMURAMOYL-PENTAPEPTIDE-TRANSFERASE"/>
    <property type="match status" value="1"/>
</dbReference>
<dbReference type="PANTHER" id="PTHR22926:SF5">
    <property type="entry name" value="PHOSPHO-N-ACETYLMURAMOYL-PENTAPEPTIDE-TRANSFERASE HOMOLOG"/>
    <property type="match status" value="1"/>
</dbReference>
<dbReference type="Pfam" id="PF00953">
    <property type="entry name" value="Glycos_transf_4"/>
    <property type="match status" value="1"/>
</dbReference>
<dbReference type="Pfam" id="PF10555">
    <property type="entry name" value="MraY_sig1"/>
    <property type="match status" value="1"/>
</dbReference>
<dbReference type="PROSITE" id="PS01347">
    <property type="entry name" value="MRAY_1"/>
    <property type="match status" value="1"/>
</dbReference>
<dbReference type="PROSITE" id="PS01348">
    <property type="entry name" value="MRAY_2"/>
    <property type="match status" value="1"/>
</dbReference>
<sequence length="361" mass="39840">MLYWLTQLLQGQYHAFRVFQYLTFRSILASLTALIVGLLCGPLMIRWLRGLQIGQMVRSDGPQTHLSKAGTPTMGGVLILLAITVSCLLWCDLRQTSLWLVLLVTLANGLVGWVDDYRKLVLKNSKGLPGRWKYFWQSVIALVAVSYLYWNASLPVHTQLTAPFFKTVTWDLGIFFPVLAYFVIVGSSNAVNLTDGLDGLAIMPIVMVAGALGVFAYASSNAVYSNYLGIPYVPNTGELTIFCSSIVGAGLGFLWYNSYPAQVFMGDVGSLALGAALGIVAVVVRQELVLLIMGGLFVIETLSVILQVGYFKYSGGKRLFRMAPLHHHFELKGWSEPKVIVRFWIITVVFVLCGLATLKLR</sequence>
<feature type="chain" id="PRO_0000108844" description="Phospho-N-acetylmuramoyl-pentapeptide-transferase">
    <location>
        <begin position="1"/>
        <end position="361"/>
    </location>
</feature>
<feature type="transmembrane region" description="Helical" evidence="1">
    <location>
        <begin position="27"/>
        <end position="47"/>
    </location>
</feature>
<feature type="transmembrane region" description="Helical" evidence="1">
    <location>
        <begin position="70"/>
        <end position="90"/>
    </location>
</feature>
<feature type="transmembrane region" description="Helical" evidence="1">
    <location>
        <begin position="97"/>
        <end position="117"/>
    </location>
</feature>
<feature type="transmembrane region" description="Helical" evidence="1">
    <location>
        <begin position="134"/>
        <end position="154"/>
    </location>
</feature>
<feature type="transmembrane region" description="Helical" evidence="1">
    <location>
        <begin position="167"/>
        <end position="187"/>
    </location>
</feature>
<feature type="transmembrane region" description="Helical" evidence="1">
    <location>
        <begin position="199"/>
        <end position="219"/>
    </location>
</feature>
<feature type="transmembrane region" description="Helical" evidence="1">
    <location>
        <begin position="236"/>
        <end position="256"/>
    </location>
</feature>
<feature type="transmembrane region" description="Helical" evidence="1">
    <location>
        <begin position="263"/>
        <end position="283"/>
    </location>
</feature>
<feature type="transmembrane region" description="Helical" evidence="1">
    <location>
        <begin position="288"/>
        <end position="308"/>
    </location>
</feature>
<feature type="transmembrane region" description="Helical" evidence="1">
    <location>
        <begin position="338"/>
        <end position="358"/>
    </location>
</feature>
<proteinExistence type="inferred from homology"/>
<gene>
    <name evidence="1" type="primary">mraY</name>
    <name type="ordered locus">lpl2540</name>
</gene>
<protein>
    <recommendedName>
        <fullName evidence="1">Phospho-N-acetylmuramoyl-pentapeptide-transferase</fullName>
        <ecNumber evidence="1">2.7.8.13</ecNumber>
    </recommendedName>
    <alternativeName>
        <fullName evidence="1">UDP-MurNAc-pentapeptide phosphotransferase</fullName>
    </alternativeName>
</protein>
<accession>Q5WTI4</accession>